<proteinExistence type="inferred from homology"/>
<sequence length="426" mass="48476">MNNLKNLRGTVDLLPDQLIKWQNVEKIVLEQLARASIKEIRTPILEMTELFIRGIGEGTDVVSKEMYTFLDRGERSCTLRPEGTASVARALIQNGISSNPFQKLWYMGPMFRYERPQAGRQRQFHQLGVEFIGYESVRSDVEIIALAWDILGKLGIKELNLEINSLGDIDDRLNFQKSFLKWLEKNKDSLDLDSQNRINKNPLRILDSKNMQTKKALENAPILFNFLSEKSHKRYSDLKKQLNVLQIPYVENFNLVRGLDYYTHTAFEITSCALGSQATVCGGGRYDNLIKQMGGPNTPAIGFAIGLERLILLAGKDLEVPRNTDIYIINQGLIAESLAMDLSRKLRNYDLLVELDLSGASFSKQFKKANKLKSKSIIVIGDDEAANKEFIIRLFDHSGNANKEEVISFENDIKLEKWLKINLLSK</sequence>
<dbReference type="EC" id="6.1.1.21" evidence="1"/>
<dbReference type="EMBL" id="CP000111">
    <property type="protein sequence ID" value="ABB49684.1"/>
    <property type="molecule type" value="Genomic_DNA"/>
</dbReference>
<dbReference type="RefSeq" id="WP_011376179.1">
    <property type="nucleotide sequence ID" value="NC_007577.1"/>
</dbReference>
<dbReference type="SMR" id="Q31BR1"/>
<dbReference type="STRING" id="74546.PMT9312_0623"/>
<dbReference type="KEGG" id="pmi:PMT9312_0623"/>
<dbReference type="eggNOG" id="COG0124">
    <property type="taxonomic scope" value="Bacteria"/>
</dbReference>
<dbReference type="HOGENOM" id="CLU_025113_1_1_3"/>
<dbReference type="OrthoDB" id="9800814at2"/>
<dbReference type="Proteomes" id="UP000002715">
    <property type="component" value="Chromosome"/>
</dbReference>
<dbReference type="GO" id="GO:0005737">
    <property type="term" value="C:cytoplasm"/>
    <property type="evidence" value="ECO:0007669"/>
    <property type="project" value="UniProtKB-SubCell"/>
</dbReference>
<dbReference type="GO" id="GO:0005524">
    <property type="term" value="F:ATP binding"/>
    <property type="evidence" value="ECO:0007669"/>
    <property type="project" value="UniProtKB-UniRule"/>
</dbReference>
<dbReference type="GO" id="GO:0004821">
    <property type="term" value="F:histidine-tRNA ligase activity"/>
    <property type="evidence" value="ECO:0007669"/>
    <property type="project" value="UniProtKB-UniRule"/>
</dbReference>
<dbReference type="GO" id="GO:0006427">
    <property type="term" value="P:histidyl-tRNA aminoacylation"/>
    <property type="evidence" value="ECO:0007669"/>
    <property type="project" value="UniProtKB-UniRule"/>
</dbReference>
<dbReference type="CDD" id="cd00773">
    <property type="entry name" value="HisRS-like_core"/>
    <property type="match status" value="1"/>
</dbReference>
<dbReference type="Gene3D" id="3.40.50.800">
    <property type="entry name" value="Anticodon-binding domain"/>
    <property type="match status" value="1"/>
</dbReference>
<dbReference type="Gene3D" id="3.30.930.10">
    <property type="entry name" value="Bira Bifunctional Protein, Domain 2"/>
    <property type="match status" value="1"/>
</dbReference>
<dbReference type="HAMAP" id="MF_00127">
    <property type="entry name" value="His_tRNA_synth"/>
    <property type="match status" value="1"/>
</dbReference>
<dbReference type="InterPro" id="IPR006195">
    <property type="entry name" value="aa-tRNA-synth_II"/>
</dbReference>
<dbReference type="InterPro" id="IPR045864">
    <property type="entry name" value="aa-tRNA-synth_II/BPL/LPL"/>
</dbReference>
<dbReference type="InterPro" id="IPR004154">
    <property type="entry name" value="Anticodon-bd"/>
</dbReference>
<dbReference type="InterPro" id="IPR036621">
    <property type="entry name" value="Anticodon-bd_dom_sf"/>
</dbReference>
<dbReference type="InterPro" id="IPR015807">
    <property type="entry name" value="His-tRNA-ligase"/>
</dbReference>
<dbReference type="InterPro" id="IPR041715">
    <property type="entry name" value="HisRS-like_core"/>
</dbReference>
<dbReference type="InterPro" id="IPR004516">
    <property type="entry name" value="HisRS/HisZ"/>
</dbReference>
<dbReference type="NCBIfam" id="TIGR00442">
    <property type="entry name" value="hisS"/>
    <property type="match status" value="1"/>
</dbReference>
<dbReference type="PANTHER" id="PTHR43707:SF1">
    <property type="entry name" value="HISTIDINE--TRNA LIGASE, MITOCHONDRIAL-RELATED"/>
    <property type="match status" value="1"/>
</dbReference>
<dbReference type="PANTHER" id="PTHR43707">
    <property type="entry name" value="HISTIDYL-TRNA SYNTHETASE"/>
    <property type="match status" value="1"/>
</dbReference>
<dbReference type="Pfam" id="PF03129">
    <property type="entry name" value="HGTP_anticodon"/>
    <property type="match status" value="1"/>
</dbReference>
<dbReference type="Pfam" id="PF13393">
    <property type="entry name" value="tRNA-synt_His"/>
    <property type="match status" value="1"/>
</dbReference>
<dbReference type="PIRSF" id="PIRSF001549">
    <property type="entry name" value="His-tRNA_synth"/>
    <property type="match status" value="1"/>
</dbReference>
<dbReference type="SUPFAM" id="SSF52954">
    <property type="entry name" value="Class II aaRS ABD-related"/>
    <property type="match status" value="1"/>
</dbReference>
<dbReference type="SUPFAM" id="SSF55681">
    <property type="entry name" value="Class II aaRS and biotin synthetases"/>
    <property type="match status" value="1"/>
</dbReference>
<dbReference type="PROSITE" id="PS50862">
    <property type="entry name" value="AA_TRNA_LIGASE_II"/>
    <property type="match status" value="1"/>
</dbReference>
<evidence type="ECO:0000255" key="1">
    <source>
        <dbReference type="HAMAP-Rule" id="MF_00127"/>
    </source>
</evidence>
<accession>Q31BR1</accession>
<reference key="1">
    <citation type="journal article" date="2006" name="Science">
        <title>Genomic islands and the ecology and evolution of Prochlorococcus.</title>
        <authorList>
            <person name="Coleman M.L."/>
            <person name="Sullivan M.B."/>
            <person name="Martiny A.C."/>
            <person name="Steglich C."/>
            <person name="Barry K."/>
            <person name="Delong E.F."/>
            <person name="Chisholm S.W."/>
        </authorList>
    </citation>
    <scope>NUCLEOTIDE SEQUENCE [LARGE SCALE GENOMIC DNA]</scope>
    <source>
        <strain>MIT 9312</strain>
    </source>
</reference>
<organism>
    <name type="scientific">Prochlorococcus marinus (strain MIT 9312)</name>
    <dbReference type="NCBI Taxonomy" id="74546"/>
    <lineage>
        <taxon>Bacteria</taxon>
        <taxon>Bacillati</taxon>
        <taxon>Cyanobacteriota</taxon>
        <taxon>Cyanophyceae</taxon>
        <taxon>Synechococcales</taxon>
        <taxon>Prochlorococcaceae</taxon>
        <taxon>Prochlorococcus</taxon>
    </lineage>
</organism>
<keyword id="KW-0030">Aminoacyl-tRNA synthetase</keyword>
<keyword id="KW-0067">ATP-binding</keyword>
<keyword id="KW-0963">Cytoplasm</keyword>
<keyword id="KW-0436">Ligase</keyword>
<keyword id="KW-0547">Nucleotide-binding</keyword>
<keyword id="KW-0648">Protein biosynthesis</keyword>
<name>SYH_PROM9</name>
<feature type="chain" id="PRO_1000016413" description="Histidine--tRNA ligase">
    <location>
        <begin position="1"/>
        <end position="426"/>
    </location>
</feature>
<gene>
    <name evidence="1" type="primary">hisS</name>
    <name type="ordered locus">PMT9312_0623</name>
</gene>
<comment type="catalytic activity">
    <reaction evidence="1">
        <text>tRNA(His) + L-histidine + ATP = L-histidyl-tRNA(His) + AMP + diphosphate + H(+)</text>
        <dbReference type="Rhea" id="RHEA:17313"/>
        <dbReference type="Rhea" id="RHEA-COMP:9665"/>
        <dbReference type="Rhea" id="RHEA-COMP:9689"/>
        <dbReference type="ChEBI" id="CHEBI:15378"/>
        <dbReference type="ChEBI" id="CHEBI:30616"/>
        <dbReference type="ChEBI" id="CHEBI:33019"/>
        <dbReference type="ChEBI" id="CHEBI:57595"/>
        <dbReference type="ChEBI" id="CHEBI:78442"/>
        <dbReference type="ChEBI" id="CHEBI:78527"/>
        <dbReference type="ChEBI" id="CHEBI:456215"/>
        <dbReference type="EC" id="6.1.1.21"/>
    </reaction>
</comment>
<comment type="subunit">
    <text evidence="1">Homodimer.</text>
</comment>
<comment type="subcellular location">
    <subcellularLocation>
        <location evidence="1">Cytoplasm</location>
    </subcellularLocation>
</comment>
<comment type="similarity">
    <text evidence="1">Belongs to the class-II aminoacyl-tRNA synthetase family.</text>
</comment>
<protein>
    <recommendedName>
        <fullName evidence="1">Histidine--tRNA ligase</fullName>
        <ecNumber evidence="1">6.1.1.21</ecNumber>
    </recommendedName>
    <alternativeName>
        <fullName evidence="1">Histidyl-tRNA synthetase</fullName>
        <shortName evidence="1">HisRS</shortName>
    </alternativeName>
</protein>